<sequence>MIHGIGIDLIEIDRIKKAFEKQKDKLVKRILTQEEEQQFHSFKSEKRKLEFLSGRFATKEAFSKALGTGLGKTVAFKDINCYNDIKGKPCIDYNGFIVHVSITHTEHYAMSQVLLEKRD</sequence>
<organism>
    <name type="scientific">Staphylococcus haemolyticus (strain JCSC1435)</name>
    <dbReference type="NCBI Taxonomy" id="279808"/>
    <lineage>
        <taxon>Bacteria</taxon>
        <taxon>Bacillati</taxon>
        <taxon>Bacillota</taxon>
        <taxon>Bacilli</taxon>
        <taxon>Bacillales</taxon>
        <taxon>Staphylococcaceae</taxon>
        <taxon>Staphylococcus</taxon>
    </lineage>
</organism>
<evidence type="ECO:0000255" key="1">
    <source>
        <dbReference type="HAMAP-Rule" id="MF_00101"/>
    </source>
</evidence>
<keyword id="KW-0963">Cytoplasm</keyword>
<keyword id="KW-0275">Fatty acid biosynthesis</keyword>
<keyword id="KW-0276">Fatty acid metabolism</keyword>
<keyword id="KW-0444">Lipid biosynthesis</keyword>
<keyword id="KW-0443">Lipid metabolism</keyword>
<keyword id="KW-0460">Magnesium</keyword>
<keyword id="KW-0479">Metal-binding</keyword>
<keyword id="KW-0808">Transferase</keyword>
<gene>
    <name evidence="1" type="primary">acpS</name>
    <name type="ordered locus">SH0960</name>
</gene>
<dbReference type="EC" id="2.7.8.7" evidence="1"/>
<dbReference type="EMBL" id="AP006716">
    <property type="protein sequence ID" value="BAE04269.1"/>
    <property type="molecule type" value="Genomic_DNA"/>
</dbReference>
<dbReference type="RefSeq" id="WP_011275269.1">
    <property type="nucleotide sequence ID" value="NC_007168.1"/>
</dbReference>
<dbReference type="SMR" id="Q4L7V6"/>
<dbReference type="KEGG" id="sha:SH0960"/>
<dbReference type="eggNOG" id="COG0736">
    <property type="taxonomic scope" value="Bacteria"/>
</dbReference>
<dbReference type="HOGENOM" id="CLU_089696_1_2_9"/>
<dbReference type="OrthoDB" id="517356at2"/>
<dbReference type="Proteomes" id="UP000000543">
    <property type="component" value="Chromosome"/>
</dbReference>
<dbReference type="GO" id="GO:0005737">
    <property type="term" value="C:cytoplasm"/>
    <property type="evidence" value="ECO:0007669"/>
    <property type="project" value="UniProtKB-SubCell"/>
</dbReference>
<dbReference type="GO" id="GO:0008897">
    <property type="term" value="F:holo-[acyl-carrier-protein] synthase activity"/>
    <property type="evidence" value="ECO:0007669"/>
    <property type="project" value="UniProtKB-UniRule"/>
</dbReference>
<dbReference type="GO" id="GO:0000287">
    <property type="term" value="F:magnesium ion binding"/>
    <property type="evidence" value="ECO:0007669"/>
    <property type="project" value="UniProtKB-UniRule"/>
</dbReference>
<dbReference type="GO" id="GO:0006633">
    <property type="term" value="P:fatty acid biosynthetic process"/>
    <property type="evidence" value="ECO:0007669"/>
    <property type="project" value="UniProtKB-UniRule"/>
</dbReference>
<dbReference type="Gene3D" id="3.90.470.20">
    <property type="entry name" value="4'-phosphopantetheinyl transferase domain"/>
    <property type="match status" value="1"/>
</dbReference>
<dbReference type="HAMAP" id="MF_00101">
    <property type="entry name" value="AcpS"/>
    <property type="match status" value="1"/>
</dbReference>
<dbReference type="InterPro" id="IPR008278">
    <property type="entry name" value="4-PPantetheinyl_Trfase_dom"/>
</dbReference>
<dbReference type="InterPro" id="IPR037143">
    <property type="entry name" value="4-PPantetheinyl_Trfase_dom_sf"/>
</dbReference>
<dbReference type="InterPro" id="IPR002582">
    <property type="entry name" value="ACPS"/>
</dbReference>
<dbReference type="InterPro" id="IPR004568">
    <property type="entry name" value="Ppantetheine-prot_Trfase_dom"/>
</dbReference>
<dbReference type="NCBIfam" id="TIGR00516">
    <property type="entry name" value="acpS"/>
    <property type="match status" value="1"/>
</dbReference>
<dbReference type="NCBIfam" id="TIGR00556">
    <property type="entry name" value="pantethn_trn"/>
    <property type="match status" value="1"/>
</dbReference>
<dbReference type="Pfam" id="PF01648">
    <property type="entry name" value="ACPS"/>
    <property type="match status" value="1"/>
</dbReference>
<dbReference type="SUPFAM" id="SSF56214">
    <property type="entry name" value="4'-phosphopantetheinyl transferase"/>
    <property type="match status" value="1"/>
</dbReference>
<name>ACPS_STAHJ</name>
<feature type="chain" id="PRO_0000228308" description="Holo-[acyl-carrier-protein] synthase">
    <location>
        <begin position="1"/>
        <end position="119"/>
    </location>
</feature>
<feature type="binding site" evidence="1">
    <location>
        <position position="8"/>
    </location>
    <ligand>
        <name>Mg(2+)</name>
        <dbReference type="ChEBI" id="CHEBI:18420"/>
    </ligand>
</feature>
<feature type="binding site" evidence="1">
    <location>
        <position position="60"/>
    </location>
    <ligand>
        <name>Mg(2+)</name>
        <dbReference type="ChEBI" id="CHEBI:18420"/>
    </ligand>
</feature>
<protein>
    <recommendedName>
        <fullName evidence="1">Holo-[acyl-carrier-protein] synthase</fullName>
        <shortName evidence="1">Holo-ACP synthase</shortName>
        <ecNumber evidence="1">2.7.8.7</ecNumber>
    </recommendedName>
    <alternativeName>
        <fullName evidence="1">4'-phosphopantetheinyl transferase AcpS</fullName>
    </alternativeName>
</protein>
<comment type="function">
    <text evidence="1">Transfers the 4'-phosphopantetheine moiety from coenzyme A to a Ser of acyl-carrier-protein.</text>
</comment>
<comment type="catalytic activity">
    <reaction evidence="1">
        <text>apo-[ACP] + CoA = holo-[ACP] + adenosine 3',5'-bisphosphate + H(+)</text>
        <dbReference type="Rhea" id="RHEA:12068"/>
        <dbReference type="Rhea" id="RHEA-COMP:9685"/>
        <dbReference type="Rhea" id="RHEA-COMP:9690"/>
        <dbReference type="ChEBI" id="CHEBI:15378"/>
        <dbReference type="ChEBI" id="CHEBI:29999"/>
        <dbReference type="ChEBI" id="CHEBI:57287"/>
        <dbReference type="ChEBI" id="CHEBI:58343"/>
        <dbReference type="ChEBI" id="CHEBI:64479"/>
        <dbReference type="EC" id="2.7.8.7"/>
    </reaction>
</comment>
<comment type="cofactor">
    <cofactor evidence="1">
        <name>Mg(2+)</name>
        <dbReference type="ChEBI" id="CHEBI:18420"/>
    </cofactor>
</comment>
<comment type="subcellular location">
    <subcellularLocation>
        <location evidence="1">Cytoplasm</location>
    </subcellularLocation>
</comment>
<comment type="similarity">
    <text evidence="1">Belongs to the P-Pant transferase superfamily. AcpS family.</text>
</comment>
<accession>Q4L7V6</accession>
<reference key="1">
    <citation type="journal article" date="2005" name="J. Bacteriol.">
        <title>Whole-genome sequencing of Staphylococcus haemolyticus uncovers the extreme plasticity of its genome and the evolution of human-colonizing staphylococcal species.</title>
        <authorList>
            <person name="Takeuchi F."/>
            <person name="Watanabe S."/>
            <person name="Baba T."/>
            <person name="Yuzawa H."/>
            <person name="Ito T."/>
            <person name="Morimoto Y."/>
            <person name="Kuroda M."/>
            <person name="Cui L."/>
            <person name="Takahashi M."/>
            <person name="Ankai A."/>
            <person name="Baba S."/>
            <person name="Fukui S."/>
            <person name="Lee J.C."/>
            <person name="Hiramatsu K."/>
        </authorList>
    </citation>
    <scope>NUCLEOTIDE SEQUENCE [LARGE SCALE GENOMIC DNA]</scope>
    <source>
        <strain>JCSC1435</strain>
    </source>
</reference>
<proteinExistence type="inferred from homology"/>